<reference key="1">
    <citation type="journal article" date="2011" name="MBio">
        <title>Novel metabolic attributes of the genus Cyanothece, comprising a group of unicellular nitrogen-fixing Cyanobacteria.</title>
        <authorList>
            <person name="Bandyopadhyay A."/>
            <person name="Elvitigala T."/>
            <person name="Welsh E."/>
            <person name="Stockel J."/>
            <person name="Liberton M."/>
            <person name="Min H."/>
            <person name="Sherman L.A."/>
            <person name="Pakrasi H.B."/>
        </authorList>
    </citation>
    <scope>NUCLEOTIDE SEQUENCE [LARGE SCALE GENOMIC DNA]</scope>
    <source>
        <strain>PCC 8801 / RF-1</strain>
    </source>
</reference>
<protein>
    <recommendedName>
        <fullName evidence="1">Pyridoxine/pyridoxamine 5'-phosphate oxidase</fullName>
        <ecNumber evidence="1">1.4.3.5</ecNumber>
    </recommendedName>
    <alternativeName>
        <fullName evidence="1">PNP/PMP oxidase</fullName>
        <shortName evidence="1">PNPOx</shortName>
    </alternativeName>
    <alternativeName>
        <fullName evidence="1">Pyridoxal 5'-phosphate synthase</fullName>
    </alternativeName>
</protein>
<gene>
    <name evidence="1" type="primary">pdxH</name>
    <name type="ordered locus">PCC8801_0930</name>
</gene>
<accession>B7JZR4</accession>
<keyword id="KW-0285">Flavoprotein</keyword>
<keyword id="KW-0288">FMN</keyword>
<keyword id="KW-0560">Oxidoreductase</keyword>
<keyword id="KW-0664">Pyridoxine biosynthesis</keyword>
<keyword id="KW-1185">Reference proteome</keyword>
<dbReference type="EC" id="1.4.3.5" evidence="1"/>
<dbReference type="EMBL" id="CP001287">
    <property type="protein sequence ID" value="ACK65007.1"/>
    <property type="molecule type" value="Genomic_DNA"/>
</dbReference>
<dbReference type="RefSeq" id="WP_012594282.1">
    <property type="nucleotide sequence ID" value="NC_011726.1"/>
</dbReference>
<dbReference type="SMR" id="B7JZR4"/>
<dbReference type="STRING" id="41431.PCC8801_0930"/>
<dbReference type="KEGG" id="cyp:PCC8801_0930"/>
<dbReference type="eggNOG" id="COG0259">
    <property type="taxonomic scope" value="Bacteria"/>
</dbReference>
<dbReference type="HOGENOM" id="CLU_032263_2_2_3"/>
<dbReference type="OrthoDB" id="9780392at2"/>
<dbReference type="UniPathway" id="UPA01068">
    <property type="reaction ID" value="UER00304"/>
</dbReference>
<dbReference type="UniPathway" id="UPA01068">
    <property type="reaction ID" value="UER00305"/>
</dbReference>
<dbReference type="Proteomes" id="UP000008204">
    <property type="component" value="Chromosome"/>
</dbReference>
<dbReference type="GO" id="GO:0010181">
    <property type="term" value="F:FMN binding"/>
    <property type="evidence" value="ECO:0007669"/>
    <property type="project" value="UniProtKB-UniRule"/>
</dbReference>
<dbReference type="GO" id="GO:0004733">
    <property type="term" value="F:pyridoxamine phosphate oxidase activity"/>
    <property type="evidence" value="ECO:0007669"/>
    <property type="project" value="UniProtKB-UniRule"/>
</dbReference>
<dbReference type="GO" id="GO:0008615">
    <property type="term" value="P:pyridoxine biosynthetic process"/>
    <property type="evidence" value="ECO:0007669"/>
    <property type="project" value="UniProtKB-KW"/>
</dbReference>
<dbReference type="FunFam" id="2.30.110.10:FF:000020">
    <property type="entry name" value="PNPO isoform 11"/>
    <property type="match status" value="1"/>
</dbReference>
<dbReference type="Gene3D" id="2.30.110.10">
    <property type="entry name" value="Electron Transport, Fmn-binding Protein, Chain A"/>
    <property type="match status" value="1"/>
</dbReference>
<dbReference type="HAMAP" id="MF_01629">
    <property type="entry name" value="PdxH"/>
    <property type="match status" value="1"/>
</dbReference>
<dbReference type="InterPro" id="IPR000659">
    <property type="entry name" value="Pyridox_Oxase"/>
</dbReference>
<dbReference type="InterPro" id="IPR019740">
    <property type="entry name" value="Pyridox_Oxase_CS"/>
</dbReference>
<dbReference type="InterPro" id="IPR011576">
    <property type="entry name" value="Pyridox_Oxase_N"/>
</dbReference>
<dbReference type="InterPro" id="IPR019576">
    <property type="entry name" value="Pyridoxamine_oxidase_dimer_C"/>
</dbReference>
<dbReference type="InterPro" id="IPR012349">
    <property type="entry name" value="Split_barrel_FMN-bd"/>
</dbReference>
<dbReference type="NCBIfam" id="TIGR00558">
    <property type="entry name" value="pdxH"/>
    <property type="match status" value="1"/>
</dbReference>
<dbReference type="NCBIfam" id="NF004231">
    <property type="entry name" value="PRK05679.1"/>
    <property type="match status" value="1"/>
</dbReference>
<dbReference type="PANTHER" id="PTHR10851:SF0">
    <property type="entry name" value="PYRIDOXINE-5'-PHOSPHATE OXIDASE"/>
    <property type="match status" value="1"/>
</dbReference>
<dbReference type="PANTHER" id="PTHR10851">
    <property type="entry name" value="PYRIDOXINE-5-PHOSPHATE OXIDASE"/>
    <property type="match status" value="1"/>
</dbReference>
<dbReference type="Pfam" id="PF10590">
    <property type="entry name" value="PNP_phzG_C"/>
    <property type="match status" value="1"/>
</dbReference>
<dbReference type="Pfam" id="PF01243">
    <property type="entry name" value="PNPOx_N"/>
    <property type="match status" value="1"/>
</dbReference>
<dbReference type="PIRSF" id="PIRSF000190">
    <property type="entry name" value="Pyd_amn-ph_oxd"/>
    <property type="match status" value="1"/>
</dbReference>
<dbReference type="SUPFAM" id="SSF50475">
    <property type="entry name" value="FMN-binding split barrel"/>
    <property type="match status" value="1"/>
</dbReference>
<dbReference type="PROSITE" id="PS01064">
    <property type="entry name" value="PYRIDOX_OXIDASE"/>
    <property type="match status" value="1"/>
</dbReference>
<evidence type="ECO:0000255" key="1">
    <source>
        <dbReference type="HAMAP-Rule" id="MF_01629"/>
    </source>
</evidence>
<feature type="chain" id="PRO_1000186303" description="Pyridoxine/pyridoxamine 5'-phosphate oxidase">
    <location>
        <begin position="1"/>
        <end position="212"/>
    </location>
</feature>
<feature type="binding site" evidence="1">
    <location>
        <begin position="7"/>
        <end position="10"/>
    </location>
    <ligand>
        <name>substrate</name>
    </ligand>
</feature>
<feature type="binding site" evidence="1">
    <location>
        <begin position="60"/>
        <end position="65"/>
    </location>
    <ligand>
        <name>FMN</name>
        <dbReference type="ChEBI" id="CHEBI:58210"/>
    </ligand>
</feature>
<feature type="binding site" evidence="1">
    <location>
        <position position="65"/>
    </location>
    <ligand>
        <name>substrate</name>
    </ligand>
</feature>
<feature type="binding site" evidence="1">
    <location>
        <begin position="75"/>
        <end position="76"/>
    </location>
    <ligand>
        <name>FMN</name>
        <dbReference type="ChEBI" id="CHEBI:58210"/>
    </ligand>
</feature>
<feature type="binding site" evidence="1">
    <location>
        <position position="82"/>
    </location>
    <ligand>
        <name>FMN</name>
        <dbReference type="ChEBI" id="CHEBI:58210"/>
    </ligand>
</feature>
<feature type="binding site" evidence="1">
    <location>
        <position position="104"/>
    </location>
    <ligand>
        <name>FMN</name>
        <dbReference type="ChEBI" id="CHEBI:58210"/>
    </ligand>
</feature>
<feature type="binding site" evidence="1">
    <location>
        <position position="122"/>
    </location>
    <ligand>
        <name>substrate</name>
    </ligand>
</feature>
<feature type="binding site" evidence="1">
    <location>
        <position position="126"/>
    </location>
    <ligand>
        <name>substrate</name>
    </ligand>
</feature>
<feature type="binding site" evidence="1">
    <location>
        <position position="130"/>
    </location>
    <ligand>
        <name>substrate</name>
    </ligand>
</feature>
<feature type="binding site" evidence="1">
    <location>
        <begin position="139"/>
        <end position="140"/>
    </location>
    <ligand>
        <name>FMN</name>
        <dbReference type="ChEBI" id="CHEBI:58210"/>
    </ligand>
</feature>
<feature type="binding site" evidence="1">
    <location>
        <position position="184"/>
    </location>
    <ligand>
        <name>FMN</name>
        <dbReference type="ChEBI" id="CHEBI:58210"/>
    </ligand>
</feature>
<feature type="binding site" evidence="1">
    <location>
        <begin position="190"/>
        <end position="192"/>
    </location>
    <ligand>
        <name>substrate</name>
    </ligand>
</feature>
<feature type="binding site" evidence="1">
    <location>
        <position position="194"/>
    </location>
    <ligand>
        <name>FMN</name>
        <dbReference type="ChEBI" id="CHEBI:58210"/>
    </ligand>
</feature>
<name>PDXH_RIPO1</name>
<sequence>MDIAALREEYTRHGLSRDDLNVDPFKQFETWFKQACESQLLEPNAMSLATASDQGEPSLRTVLLKYFDNQGFVFFTNYESNKAKQIEENPYVALLFLWLPLERQVKIRGKAAKISTAESFRYFTTRPRGSQLGAWCSEQSSVISSRQLLEMKFEEIRRKFAQGEIPLPSFWGGYRIVPHYFEFWQGRPNRLHDRFSYTLQEDNTWEIHRLSP</sequence>
<comment type="function">
    <text evidence="1">Catalyzes the oxidation of either pyridoxine 5'-phosphate (PNP) or pyridoxamine 5'-phosphate (PMP) into pyridoxal 5'-phosphate (PLP).</text>
</comment>
<comment type="catalytic activity">
    <reaction evidence="1">
        <text>pyridoxamine 5'-phosphate + O2 + H2O = pyridoxal 5'-phosphate + H2O2 + NH4(+)</text>
        <dbReference type="Rhea" id="RHEA:15817"/>
        <dbReference type="ChEBI" id="CHEBI:15377"/>
        <dbReference type="ChEBI" id="CHEBI:15379"/>
        <dbReference type="ChEBI" id="CHEBI:16240"/>
        <dbReference type="ChEBI" id="CHEBI:28938"/>
        <dbReference type="ChEBI" id="CHEBI:58451"/>
        <dbReference type="ChEBI" id="CHEBI:597326"/>
        <dbReference type="EC" id="1.4.3.5"/>
    </reaction>
</comment>
<comment type="catalytic activity">
    <reaction evidence="1">
        <text>pyridoxine 5'-phosphate + O2 = pyridoxal 5'-phosphate + H2O2</text>
        <dbReference type="Rhea" id="RHEA:15149"/>
        <dbReference type="ChEBI" id="CHEBI:15379"/>
        <dbReference type="ChEBI" id="CHEBI:16240"/>
        <dbReference type="ChEBI" id="CHEBI:58589"/>
        <dbReference type="ChEBI" id="CHEBI:597326"/>
        <dbReference type="EC" id="1.4.3.5"/>
    </reaction>
</comment>
<comment type="cofactor">
    <cofactor evidence="1">
        <name>FMN</name>
        <dbReference type="ChEBI" id="CHEBI:58210"/>
    </cofactor>
    <text evidence="1">Binds 1 FMN per subunit.</text>
</comment>
<comment type="pathway">
    <text evidence="1">Cofactor metabolism; pyridoxal 5'-phosphate salvage; pyridoxal 5'-phosphate from pyridoxamine 5'-phosphate: step 1/1.</text>
</comment>
<comment type="pathway">
    <text evidence="1">Cofactor metabolism; pyridoxal 5'-phosphate salvage; pyridoxal 5'-phosphate from pyridoxine 5'-phosphate: step 1/1.</text>
</comment>
<comment type="subunit">
    <text evidence="1">Homodimer.</text>
</comment>
<comment type="similarity">
    <text evidence="1">Belongs to the pyridoxamine 5'-phosphate oxidase family.</text>
</comment>
<organism>
    <name type="scientific">Rippkaea orientalis (strain PCC 8801 / RF-1)</name>
    <name type="common">Cyanothece sp. (strain PCC 8801)</name>
    <dbReference type="NCBI Taxonomy" id="41431"/>
    <lineage>
        <taxon>Bacteria</taxon>
        <taxon>Bacillati</taxon>
        <taxon>Cyanobacteriota</taxon>
        <taxon>Cyanophyceae</taxon>
        <taxon>Oscillatoriophycideae</taxon>
        <taxon>Chroococcales</taxon>
        <taxon>Aphanothecaceae</taxon>
        <taxon>Rippkaea</taxon>
        <taxon>Rippkaea orientalis</taxon>
    </lineage>
</organism>
<proteinExistence type="inferred from homology"/>